<proteinExistence type="evidence at transcript level"/>
<sequence length="167" mass="18324">MAPAVATWAPGLWRACNALMAAFFALAAVVQVNDPDAELWVVVYMIPAVLTLLVGFNPLVTGNFIWKSVSAIHMLFCALWAGGLAYHFLLHAKQNLLNEEEGRELSGLVIVTAWMALCHSSSKNPGGGRMHLAIAVVITLLPLLSWVYVHMNKEMRSSWPTHCKTVI</sequence>
<gene>
    <name type="primary">Tmem220</name>
</gene>
<accession>Q8BP07</accession>
<accession>Q2TB06</accession>
<accession>Q8C936</accession>
<protein>
    <recommendedName>
        <fullName>Transmembrane protein 220</fullName>
    </recommendedName>
</protein>
<comment type="subcellular location">
    <subcellularLocation>
        <location evidence="4">Membrane</location>
        <topology evidence="4">Multi-pass membrane protein</topology>
    </subcellularLocation>
</comment>
<comment type="alternative products">
    <event type="alternative splicing"/>
    <isoform>
        <id>Q8BP07-1</id>
        <name>1</name>
        <sequence type="displayed"/>
    </isoform>
    <isoform>
        <id>Q8BP07-2</id>
        <name>2</name>
        <sequence type="described" ref="VSP_031478"/>
    </isoform>
    <isoform>
        <id>Q8BP07-3</id>
        <name>3</name>
        <sequence type="described" ref="VSP_031479 VSP_031480"/>
    </isoform>
</comment>
<feature type="chain" id="PRO_0000319425" description="Transmembrane protein 220">
    <location>
        <begin position="1"/>
        <end position="167"/>
    </location>
</feature>
<feature type="transmembrane region" description="Helical" evidence="1">
    <location>
        <begin position="10"/>
        <end position="30"/>
    </location>
</feature>
<feature type="transmembrane region" description="Helical" evidence="1">
    <location>
        <begin position="40"/>
        <end position="60"/>
    </location>
</feature>
<feature type="transmembrane region" description="Helical" evidence="1">
    <location>
        <begin position="69"/>
        <end position="89"/>
    </location>
</feature>
<feature type="transmembrane region" description="Helical" evidence="1">
    <location>
        <begin position="104"/>
        <end position="122"/>
    </location>
</feature>
<feature type="transmembrane region" description="Helical" evidence="1">
    <location>
        <begin position="130"/>
        <end position="150"/>
    </location>
</feature>
<feature type="splice variant" id="VSP_031478" description="In isoform 2." evidence="3">
    <original>V</original>
    <variation>VTRKSFCRESLYQRLPLPMTTPGMT</variation>
    <location>
        <position position="41"/>
    </location>
</feature>
<feature type="splice variant" id="VSP_031479" description="In isoform 3." evidence="2">
    <original>RELSG</original>
    <variation>SCLAW</variation>
    <location>
        <begin position="103"/>
        <end position="107"/>
    </location>
</feature>
<feature type="splice variant" id="VSP_031480" description="In isoform 3." evidence="2">
    <location>
        <begin position="108"/>
        <end position="167"/>
    </location>
</feature>
<dbReference type="EMBL" id="AK043094">
    <property type="protein sequence ID" value="BAC31457.1"/>
    <property type="molecule type" value="mRNA"/>
</dbReference>
<dbReference type="EMBL" id="AK078505">
    <property type="protein sequence ID" value="BAC37312.1"/>
    <property type="molecule type" value="mRNA"/>
</dbReference>
<dbReference type="EMBL" id="AL645988">
    <property type="status" value="NOT_ANNOTATED_CDS"/>
    <property type="molecule type" value="Genomic_DNA"/>
</dbReference>
<dbReference type="EMBL" id="BC110628">
    <property type="protein sequence ID" value="AAI10629.1"/>
    <property type="molecule type" value="mRNA"/>
</dbReference>
<dbReference type="EMBL" id="BC110629">
    <property type="protein sequence ID" value="AAI10630.1"/>
    <property type="molecule type" value="mRNA"/>
</dbReference>
<dbReference type="CCDS" id="CCDS24850.1">
    <molecule id="Q8BP07-2"/>
</dbReference>
<dbReference type="CCDS" id="CCDS70209.1">
    <molecule id="Q8BP07-1"/>
</dbReference>
<dbReference type="RefSeq" id="NP_001277971.1">
    <molecule id="Q8BP07-1"/>
    <property type="nucleotide sequence ID" value="NM_001291042.1"/>
</dbReference>
<dbReference type="RefSeq" id="NP_001277972.1">
    <molecule id="Q8BP07-3"/>
    <property type="nucleotide sequence ID" value="NM_001291043.1"/>
</dbReference>
<dbReference type="RefSeq" id="NP_796366.1">
    <molecule id="Q8BP07-2"/>
    <property type="nucleotide sequence ID" value="NM_177392.3"/>
</dbReference>
<dbReference type="FunCoup" id="Q8BP07">
    <property type="interactions" value="1"/>
</dbReference>
<dbReference type="STRING" id="10090.ENSMUSP00000078084"/>
<dbReference type="PeptideAtlas" id="Q8BP07"/>
<dbReference type="ProteomicsDB" id="259550">
    <molecule id="Q8BP07-1"/>
</dbReference>
<dbReference type="ProteomicsDB" id="259551">
    <molecule id="Q8BP07-2"/>
</dbReference>
<dbReference type="ProteomicsDB" id="259552">
    <molecule id="Q8BP07-3"/>
</dbReference>
<dbReference type="Antibodypedia" id="62490">
    <property type="antibodies" value="9 antibodies from 5 providers"/>
</dbReference>
<dbReference type="DNASU" id="338369"/>
<dbReference type="Ensembl" id="ENSMUST00000061786.6">
    <molecule id="Q8BP07-1"/>
    <property type="protein sequence ID" value="ENSMUSP00000057366.6"/>
    <property type="gene ID" value="ENSMUSG00000050270.13"/>
</dbReference>
<dbReference type="Ensembl" id="ENSMUST00000079077.12">
    <molecule id="Q8BP07-2"/>
    <property type="protein sequence ID" value="ENSMUSP00000078084.6"/>
    <property type="gene ID" value="ENSMUSG00000050270.13"/>
</dbReference>
<dbReference type="GeneID" id="338369"/>
<dbReference type="KEGG" id="mmu:338369"/>
<dbReference type="UCSC" id="uc007jlp.2">
    <molecule id="Q8BP07-2"/>
    <property type="organism name" value="mouse"/>
</dbReference>
<dbReference type="UCSC" id="uc007jlq.2">
    <molecule id="Q8BP07-3"/>
    <property type="organism name" value="mouse"/>
</dbReference>
<dbReference type="UCSC" id="uc007jlr.2">
    <molecule id="Q8BP07-1"/>
    <property type="organism name" value="mouse"/>
</dbReference>
<dbReference type="AGR" id="MGI:2443691"/>
<dbReference type="CTD" id="388335"/>
<dbReference type="MGI" id="MGI:2443691">
    <property type="gene designation" value="Tmem220"/>
</dbReference>
<dbReference type="VEuPathDB" id="HostDB:ENSMUSG00000050270"/>
<dbReference type="GeneTree" id="ENSGT00390000009386"/>
<dbReference type="HOGENOM" id="CLU_135112_1_0_1"/>
<dbReference type="InParanoid" id="Q8BP07"/>
<dbReference type="OMA" id="WRVCNGC"/>
<dbReference type="OrthoDB" id="66413at9989"/>
<dbReference type="PhylomeDB" id="Q8BP07"/>
<dbReference type="TreeFam" id="TF332092"/>
<dbReference type="BioGRID-ORCS" id="338369">
    <property type="hits" value="4 hits in 78 CRISPR screens"/>
</dbReference>
<dbReference type="PRO" id="PR:Q8BP07"/>
<dbReference type="Proteomes" id="UP000000589">
    <property type="component" value="Chromosome 11"/>
</dbReference>
<dbReference type="RNAct" id="Q8BP07">
    <property type="molecule type" value="protein"/>
</dbReference>
<dbReference type="Bgee" id="ENSMUSG00000050270">
    <property type="expression patterns" value="Expressed in liver and 56 other cell types or tissues"/>
</dbReference>
<dbReference type="GO" id="GO:0016020">
    <property type="term" value="C:membrane"/>
    <property type="evidence" value="ECO:0007669"/>
    <property type="project" value="UniProtKB-SubCell"/>
</dbReference>
<dbReference type="InterPro" id="IPR029377">
    <property type="entry name" value="TMEM220"/>
</dbReference>
<dbReference type="PANTHER" id="PTHR34262">
    <property type="entry name" value="TRANSMEMBRANE PROTEIN 220"/>
    <property type="match status" value="1"/>
</dbReference>
<dbReference type="PANTHER" id="PTHR34262:SF1">
    <property type="entry name" value="TRANSMEMBRANE PROTEIN 220"/>
    <property type="match status" value="1"/>
</dbReference>
<dbReference type="Pfam" id="PF15071">
    <property type="entry name" value="TMEM220"/>
    <property type="match status" value="1"/>
</dbReference>
<reference key="1">
    <citation type="journal article" date="2005" name="Science">
        <title>The transcriptional landscape of the mammalian genome.</title>
        <authorList>
            <person name="Carninci P."/>
            <person name="Kasukawa T."/>
            <person name="Katayama S."/>
            <person name="Gough J."/>
            <person name="Frith M.C."/>
            <person name="Maeda N."/>
            <person name="Oyama R."/>
            <person name="Ravasi T."/>
            <person name="Lenhard B."/>
            <person name="Wells C."/>
            <person name="Kodzius R."/>
            <person name="Shimokawa K."/>
            <person name="Bajic V.B."/>
            <person name="Brenner S.E."/>
            <person name="Batalov S."/>
            <person name="Forrest A.R."/>
            <person name="Zavolan M."/>
            <person name="Davis M.J."/>
            <person name="Wilming L.G."/>
            <person name="Aidinis V."/>
            <person name="Allen J.E."/>
            <person name="Ambesi-Impiombato A."/>
            <person name="Apweiler R."/>
            <person name="Aturaliya R.N."/>
            <person name="Bailey T.L."/>
            <person name="Bansal M."/>
            <person name="Baxter L."/>
            <person name="Beisel K.W."/>
            <person name="Bersano T."/>
            <person name="Bono H."/>
            <person name="Chalk A.M."/>
            <person name="Chiu K.P."/>
            <person name="Choudhary V."/>
            <person name="Christoffels A."/>
            <person name="Clutterbuck D.R."/>
            <person name="Crowe M.L."/>
            <person name="Dalla E."/>
            <person name="Dalrymple B.P."/>
            <person name="de Bono B."/>
            <person name="Della Gatta G."/>
            <person name="di Bernardo D."/>
            <person name="Down T."/>
            <person name="Engstrom P."/>
            <person name="Fagiolini M."/>
            <person name="Faulkner G."/>
            <person name="Fletcher C.F."/>
            <person name="Fukushima T."/>
            <person name="Furuno M."/>
            <person name="Futaki S."/>
            <person name="Gariboldi M."/>
            <person name="Georgii-Hemming P."/>
            <person name="Gingeras T.R."/>
            <person name="Gojobori T."/>
            <person name="Green R.E."/>
            <person name="Gustincich S."/>
            <person name="Harbers M."/>
            <person name="Hayashi Y."/>
            <person name="Hensch T.K."/>
            <person name="Hirokawa N."/>
            <person name="Hill D."/>
            <person name="Huminiecki L."/>
            <person name="Iacono M."/>
            <person name="Ikeo K."/>
            <person name="Iwama A."/>
            <person name="Ishikawa T."/>
            <person name="Jakt M."/>
            <person name="Kanapin A."/>
            <person name="Katoh M."/>
            <person name="Kawasawa Y."/>
            <person name="Kelso J."/>
            <person name="Kitamura H."/>
            <person name="Kitano H."/>
            <person name="Kollias G."/>
            <person name="Krishnan S.P."/>
            <person name="Kruger A."/>
            <person name="Kummerfeld S.K."/>
            <person name="Kurochkin I.V."/>
            <person name="Lareau L.F."/>
            <person name="Lazarevic D."/>
            <person name="Lipovich L."/>
            <person name="Liu J."/>
            <person name="Liuni S."/>
            <person name="McWilliam S."/>
            <person name="Madan Babu M."/>
            <person name="Madera M."/>
            <person name="Marchionni L."/>
            <person name="Matsuda H."/>
            <person name="Matsuzawa S."/>
            <person name="Miki H."/>
            <person name="Mignone F."/>
            <person name="Miyake S."/>
            <person name="Morris K."/>
            <person name="Mottagui-Tabar S."/>
            <person name="Mulder N."/>
            <person name="Nakano N."/>
            <person name="Nakauchi H."/>
            <person name="Ng P."/>
            <person name="Nilsson R."/>
            <person name="Nishiguchi S."/>
            <person name="Nishikawa S."/>
            <person name="Nori F."/>
            <person name="Ohara O."/>
            <person name="Okazaki Y."/>
            <person name="Orlando V."/>
            <person name="Pang K.C."/>
            <person name="Pavan W.J."/>
            <person name="Pavesi G."/>
            <person name="Pesole G."/>
            <person name="Petrovsky N."/>
            <person name="Piazza S."/>
            <person name="Reed J."/>
            <person name="Reid J.F."/>
            <person name="Ring B.Z."/>
            <person name="Ringwald M."/>
            <person name="Rost B."/>
            <person name="Ruan Y."/>
            <person name="Salzberg S.L."/>
            <person name="Sandelin A."/>
            <person name="Schneider C."/>
            <person name="Schoenbach C."/>
            <person name="Sekiguchi K."/>
            <person name="Semple C.A."/>
            <person name="Seno S."/>
            <person name="Sessa L."/>
            <person name="Sheng Y."/>
            <person name="Shibata Y."/>
            <person name="Shimada H."/>
            <person name="Shimada K."/>
            <person name="Silva D."/>
            <person name="Sinclair B."/>
            <person name="Sperling S."/>
            <person name="Stupka E."/>
            <person name="Sugiura K."/>
            <person name="Sultana R."/>
            <person name="Takenaka Y."/>
            <person name="Taki K."/>
            <person name="Tammoja K."/>
            <person name="Tan S.L."/>
            <person name="Tang S."/>
            <person name="Taylor M.S."/>
            <person name="Tegner J."/>
            <person name="Teichmann S.A."/>
            <person name="Ueda H.R."/>
            <person name="van Nimwegen E."/>
            <person name="Verardo R."/>
            <person name="Wei C.L."/>
            <person name="Yagi K."/>
            <person name="Yamanishi H."/>
            <person name="Zabarovsky E."/>
            <person name="Zhu S."/>
            <person name="Zimmer A."/>
            <person name="Hide W."/>
            <person name="Bult C."/>
            <person name="Grimmond S.M."/>
            <person name="Teasdale R.D."/>
            <person name="Liu E.T."/>
            <person name="Brusic V."/>
            <person name="Quackenbush J."/>
            <person name="Wahlestedt C."/>
            <person name="Mattick J.S."/>
            <person name="Hume D.A."/>
            <person name="Kai C."/>
            <person name="Sasaki D."/>
            <person name="Tomaru Y."/>
            <person name="Fukuda S."/>
            <person name="Kanamori-Katayama M."/>
            <person name="Suzuki M."/>
            <person name="Aoki J."/>
            <person name="Arakawa T."/>
            <person name="Iida J."/>
            <person name="Imamura K."/>
            <person name="Itoh M."/>
            <person name="Kato T."/>
            <person name="Kawaji H."/>
            <person name="Kawagashira N."/>
            <person name="Kawashima T."/>
            <person name="Kojima M."/>
            <person name="Kondo S."/>
            <person name="Konno H."/>
            <person name="Nakano K."/>
            <person name="Ninomiya N."/>
            <person name="Nishio T."/>
            <person name="Okada M."/>
            <person name="Plessy C."/>
            <person name="Shibata K."/>
            <person name="Shiraki T."/>
            <person name="Suzuki S."/>
            <person name="Tagami M."/>
            <person name="Waki K."/>
            <person name="Watahiki A."/>
            <person name="Okamura-Oho Y."/>
            <person name="Suzuki H."/>
            <person name="Kawai J."/>
            <person name="Hayashizaki Y."/>
        </authorList>
    </citation>
    <scope>NUCLEOTIDE SEQUENCE [LARGE SCALE MRNA] (ISOFORMS 1 AND 2)</scope>
    <source>
        <strain>C57BL/6J</strain>
        <tissue>Cerebellum</tissue>
        <tissue>Muellerian duct</tissue>
    </source>
</reference>
<reference key="2">
    <citation type="journal article" date="2009" name="PLoS Biol.">
        <title>Lineage-specific biology revealed by a finished genome assembly of the mouse.</title>
        <authorList>
            <person name="Church D.M."/>
            <person name="Goodstadt L."/>
            <person name="Hillier L.W."/>
            <person name="Zody M.C."/>
            <person name="Goldstein S."/>
            <person name="She X."/>
            <person name="Bult C.J."/>
            <person name="Agarwala R."/>
            <person name="Cherry J.L."/>
            <person name="DiCuccio M."/>
            <person name="Hlavina W."/>
            <person name="Kapustin Y."/>
            <person name="Meric P."/>
            <person name="Maglott D."/>
            <person name="Birtle Z."/>
            <person name="Marques A.C."/>
            <person name="Graves T."/>
            <person name="Zhou S."/>
            <person name="Teague B."/>
            <person name="Potamousis K."/>
            <person name="Churas C."/>
            <person name="Place M."/>
            <person name="Herschleb J."/>
            <person name="Runnheim R."/>
            <person name="Forrest D."/>
            <person name="Amos-Landgraf J."/>
            <person name="Schwartz D.C."/>
            <person name="Cheng Z."/>
            <person name="Lindblad-Toh K."/>
            <person name="Eichler E.E."/>
            <person name="Ponting C.P."/>
        </authorList>
    </citation>
    <scope>NUCLEOTIDE SEQUENCE [LARGE SCALE GENOMIC DNA]</scope>
    <source>
        <strain>C57BL/6J</strain>
    </source>
</reference>
<reference key="3">
    <citation type="journal article" date="2004" name="Genome Res.">
        <title>The status, quality, and expansion of the NIH full-length cDNA project: the Mammalian Gene Collection (MGC).</title>
        <authorList>
            <consortium name="The MGC Project Team"/>
        </authorList>
    </citation>
    <scope>NUCLEOTIDE SEQUENCE [LARGE SCALE MRNA] (ISOFORMS 1 AND 3)</scope>
</reference>
<organism>
    <name type="scientific">Mus musculus</name>
    <name type="common">Mouse</name>
    <dbReference type="NCBI Taxonomy" id="10090"/>
    <lineage>
        <taxon>Eukaryota</taxon>
        <taxon>Metazoa</taxon>
        <taxon>Chordata</taxon>
        <taxon>Craniata</taxon>
        <taxon>Vertebrata</taxon>
        <taxon>Euteleostomi</taxon>
        <taxon>Mammalia</taxon>
        <taxon>Eutheria</taxon>
        <taxon>Euarchontoglires</taxon>
        <taxon>Glires</taxon>
        <taxon>Rodentia</taxon>
        <taxon>Myomorpha</taxon>
        <taxon>Muroidea</taxon>
        <taxon>Muridae</taxon>
        <taxon>Murinae</taxon>
        <taxon>Mus</taxon>
        <taxon>Mus</taxon>
    </lineage>
</organism>
<name>TM220_MOUSE</name>
<keyword id="KW-0025">Alternative splicing</keyword>
<keyword id="KW-0472">Membrane</keyword>
<keyword id="KW-1185">Reference proteome</keyword>
<keyword id="KW-0812">Transmembrane</keyword>
<keyword id="KW-1133">Transmembrane helix</keyword>
<evidence type="ECO:0000255" key="1"/>
<evidence type="ECO:0000303" key="2">
    <source>
    </source>
</evidence>
<evidence type="ECO:0000303" key="3">
    <source>
    </source>
</evidence>
<evidence type="ECO:0000305" key="4"/>